<reference key="1">
    <citation type="journal article" date="2007" name="Science">
        <title>The Fusarium graminearum genome reveals a link between localized polymorphism and pathogen specialization.</title>
        <authorList>
            <person name="Cuomo C.A."/>
            <person name="Gueldener U."/>
            <person name="Xu J.-R."/>
            <person name="Trail F."/>
            <person name="Turgeon B.G."/>
            <person name="Di Pietro A."/>
            <person name="Walton J.D."/>
            <person name="Ma L.-J."/>
            <person name="Baker S.E."/>
            <person name="Rep M."/>
            <person name="Adam G."/>
            <person name="Antoniw J."/>
            <person name="Baldwin T."/>
            <person name="Calvo S.E."/>
            <person name="Chang Y.-L."/>
            <person name="DeCaprio D."/>
            <person name="Gale L.R."/>
            <person name="Gnerre S."/>
            <person name="Goswami R.S."/>
            <person name="Hammond-Kosack K."/>
            <person name="Harris L.J."/>
            <person name="Hilburn K."/>
            <person name="Kennell J.C."/>
            <person name="Kroken S."/>
            <person name="Magnuson J.K."/>
            <person name="Mannhaupt G."/>
            <person name="Mauceli E.W."/>
            <person name="Mewes H.-W."/>
            <person name="Mitterbauer R."/>
            <person name="Muehlbauer G."/>
            <person name="Muensterkoetter M."/>
            <person name="Nelson D."/>
            <person name="O'Donnell K."/>
            <person name="Ouellet T."/>
            <person name="Qi W."/>
            <person name="Quesneville H."/>
            <person name="Roncero M.I.G."/>
            <person name="Seong K.-Y."/>
            <person name="Tetko I.V."/>
            <person name="Urban M."/>
            <person name="Waalwijk C."/>
            <person name="Ward T.J."/>
            <person name="Yao J."/>
            <person name="Birren B.W."/>
            <person name="Kistler H.C."/>
        </authorList>
    </citation>
    <scope>NUCLEOTIDE SEQUENCE [LARGE SCALE GENOMIC DNA]</scope>
    <source>
        <strain>ATCC MYA-4620 / CBS 123657 / FGSC 9075 / NRRL 31084 / PH-1</strain>
    </source>
</reference>
<reference key="2">
    <citation type="journal article" date="2010" name="Nature">
        <title>Comparative genomics reveals mobile pathogenicity chromosomes in Fusarium.</title>
        <authorList>
            <person name="Ma L.-J."/>
            <person name="van der Does H.C."/>
            <person name="Borkovich K.A."/>
            <person name="Coleman J.J."/>
            <person name="Daboussi M.-J."/>
            <person name="Di Pietro A."/>
            <person name="Dufresne M."/>
            <person name="Freitag M."/>
            <person name="Grabherr M."/>
            <person name="Henrissat B."/>
            <person name="Houterman P.M."/>
            <person name="Kang S."/>
            <person name="Shim W.-B."/>
            <person name="Woloshuk C."/>
            <person name="Xie X."/>
            <person name="Xu J.-R."/>
            <person name="Antoniw J."/>
            <person name="Baker S.E."/>
            <person name="Bluhm B.H."/>
            <person name="Breakspear A."/>
            <person name="Brown D.W."/>
            <person name="Butchko R.A.E."/>
            <person name="Chapman S."/>
            <person name="Coulson R."/>
            <person name="Coutinho P.M."/>
            <person name="Danchin E.G.J."/>
            <person name="Diener A."/>
            <person name="Gale L.R."/>
            <person name="Gardiner D.M."/>
            <person name="Goff S."/>
            <person name="Hammond-Kosack K.E."/>
            <person name="Hilburn K."/>
            <person name="Hua-Van A."/>
            <person name="Jonkers W."/>
            <person name="Kazan K."/>
            <person name="Kodira C.D."/>
            <person name="Koehrsen M."/>
            <person name="Kumar L."/>
            <person name="Lee Y.-H."/>
            <person name="Li L."/>
            <person name="Manners J.M."/>
            <person name="Miranda-Saavedra D."/>
            <person name="Mukherjee M."/>
            <person name="Park G."/>
            <person name="Park J."/>
            <person name="Park S.-Y."/>
            <person name="Proctor R.H."/>
            <person name="Regev A."/>
            <person name="Ruiz-Roldan M.C."/>
            <person name="Sain D."/>
            <person name="Sakthikumar S."/>
            <person name="Sykes S."/>
            <person name="Schwartz D.C."/>
            <person name="Turgeon B.G."/>
            <person name="Wapinski I."/>
            <person name="Yoder O."/>
            <person name="Young S."/>
            <person name="Zeng Q."/>
            <person name="Zhou S."/>
            <person name="Galagan J."/>
            <person name="Cuomo C.A."/>
            <person name="Kistler H.C."/>
            <person name="Rep M."/>
        </authorList>
    </citation>
    <scope>GENOME REANNOTATION</scope>
    <source>
        <strain>ATCC MYA-4620 / CBS 123657 / FGSC 9075 / NRRL 31084 / PH-1</strain>
    </source>
</reference>
<reference key="3">
    <citation type="journal article" date="2015" name="BMC Genomics">
        <title>The completed genome sequence of the pathogenic ascomycete fungus Fusarium graminearum.</title>
        <authorList>
            <person name="King R."/>
            <person name="Urban M."/>
            <person name="Hammond-Kosack M.C.U."/>
            <person name="Hassani-Pak K."/>
            <person name="Hammond-Kosack K.E."/>
        </authorList>
    </citation>
    <scope>NUCLEOTIDE SEQUENCE [LARGE SCALE GENOMIC DNA]</scope>
    <source>
        <strain>ATCC MYA-4620 / CBS 123657 / FGSC 9075 / NRRL 31084 / PH-1</strain>
    </source>
</reference>
<reference key="4">
    <citation type="journal article" date="2016" name="FEBS Lett.">
        <title>FgLPMO9A from Fusarium graminearum cleaves xyloglucan independently of the backbone substitution pattern.</title>
        <authorList>
            <person name="Nekiunaite L."/>
            <person name="Petrovic D.M."/>
            <person name="Westereng B."/>
            <person name="Vaaje-Kolstad G."/>
            <person name="Hachem M.A."/>
            <person name="Varnai A."/>
            <person name="Eijsink V.G."/>
        </authorList>
    </citation>
    <scope>FUNCTION</scope>
    <scope>CATALYTIC ACTIVITY</scope>
    <scope>COFACTOR</scope>
</reference>
<keyword id="KW-0119">Carbohydrate metabolism</keyword>
<keyword id="KW-0136">Cellulose degradation</keyword>
<keyword id="KW-0186">Copper</keyword>
<keyword id="KW-1015">Disulfide bond</keyword>
<keyword id="KW-0479">Metal-binding</keyword>
<keyword id="KW-0503">Monooxygenase</keyword>
<keyword id="KW-0560">Oxidoreductase</keyword>
<keyword id="KW-0624">Polysaccharide degradation</keyword>
<keyword id="KW-1185">Reference proteome</keyword>
<keyword id="KW-0964">Secreted</keyword>
<keyword id="KW-0732">Signal</keyword>
<name>LP9A_GIBZE</name>
<sequence length="335" mass="34294">MSSFITKTVLAALVAAAGVRAHGHVESITVGGTEYEGLNPGAAAFENPRKELAAWFATNTDNGFVEPSAFGDADIICHRGAENAVKSAKVKAGEKITIKWDTWPESHKGPVIDYLASCGSAGCAKVDKTSLKFFKIAEAGMTSGGKFASDDLIAAGNTWEVTVPTSIKAGNYVLRHEIIALHAAGQENGAQNYPQCFNLEVESDGTAEPAGVAGTSLYTASEKGIVFDLYNNPTSYPIPGPKMNIAGGSSGAAPSTPATPTTGSGSDTPSNTAAPVESAPAESAAPVESAPAAGNGNQNNGGASPVETEAPATPQPTKTGCKAKKARRHARDMMN</sequence>
<evidence type="ECO:0000250" key="1">
    <source>
        <dbReference type="UniProtKB" id="Q1K8B6"/>
    </source>
</evidence>
<evidence type="ECO:0000250" key="2">
    <source>
        <dbReference type="UniProtKB" id="Q4WP32"/>
    </source>
</evidence>
<evidence type="ECO:0000255" key="3"/>
<evidence type="ECO:0000256" key="4">
    <source>
        <dbReference type="SAM" id="MobiDB-lite"/>
    </source>
</evidence>
<evidence type="ECO:0000269" key="5">
    <source>
    </source>
</evidence>
<evidence type="ECO:0000303" key="6">
    <source>
    </source>
</evidence>
<evidence type="ECO:0000305" key="7"/>
<evidence type="ECO:0000305" key="8">
    <source>
    </source>
</evidence>
<feature type="signal peptide" evidence="3">
    <location>
        <begin position="1"/>
        <end position="21"/>
    </location>
</feature>
<feature type="chain" id="PRO_5010124092" description="AA9 family lytic polysaccharide monooxygenase A">
    <location>
        <begin position="22"/>
        <end position="335"/>
    </location>
</feature>
<feature type="region of interest" description="Disordered" evidence="4">
    <location>
        <begin position="241"/>
        <end position="335"/>
    </location>
</feature>
<feature type="compositionally biased region" description="Low complexity" evidence="4">
    <location>
        <begin position="251"/>
        <end position="303"/>
    </location>
</feature>
<feature type="compositionally biased region" description="Basic residues" evidence="4">
    <location>
        <begin position="321"/>
        <end position="335"/>
    </location>
</feature>
<feature type="binding site" evidence="1">
    <location>
        <position position="22"/>
    </location>
    <ligand>
        <name>Cu(2+)</name>
        <dbReference type="ChEBI" id="CHEBI:29036"/>
        <note>catalytic</note>
    </ligand>
</feature>
<feature type="binding site" evidence="1">
    <location>
        <position position="107"/>
    </location>
    <ligand>
        <name>Cu(2+)</name>
        <dbReference type="ChEBI" id="CHEBI:29036"/>
        <note>catalytic</note>
    </ligand>
</feature>
<feature type="binding site" evidence="1">
    <location>
        <position position="182"/>
    </location>
    <ligand>
        <name>O2</name>
        <dbReference type="ChEBI" id="CHEBI:15379"/>
    </ligand>
</feature>
<feature type="binding site" evidence="1">
    <location>
        <position position="191"/>
    </location>
    <ligand>
        <name>O2</name>
        <dbReference type="ChEBI" id="CHEBI:15379"/>
    </ligand>
</feature>
<feature type="binding site" evidence="1">
    <location>
        <position position="193"/>
    </location>
    <ligand>
        <name>Cu(2+)</name>
        <dbReference type="ChEBI" id="CHEBI:29036"/>
        <note>catalytic</note>
    </ligand>
</feature>
<feature type="disulfide bond" evidence="2">
    <location>
        <begin position="77"/>
        <end position="196"/>
    </location>
</feature>
<protein>
    <recommendedName>
        <fullName evidence="6">AA9 family lytic polysaccharide monooxygenase A</fullName>
        <shortName evidence="6">LPMO9A</shortName>
        <ecNumber evidence="5">1.14.99.56</ecNumber>
    </recommendedName>
    <alternativeName>
        <fullName evidence="7">Cellulase LPMO9A</fullName>
    </alternativeName>
    <alternativeName>
        <fullName evidence="7">Endo-beta-1,4-glucanase LPMO9A</fullName>
        <shortName evidence="7">Endoglucanase LPMO9A</shortName>
    </alternativeName>
    <alternativeName>
        <fullName evidence="7">Glycosyl hydrolase 61 family protein LPMO9A</fullName>
    </alternativeName>
</protein>
<comment type="function">
    <text evidence="5">Lytic polysaccharide monooxygenase (LPMO) that depolymerizes crystalline and amorphous polysaccharides via the oxidation of scissile alpha- or beta-(1-4)-glycosidic bonds, yielding C1 or C4 oxidation products (PubMed:27587308). Catalysis by LPMOs requires the reduction of the active-site copper from Cu(II) to Cu(I) by a reducing agent and H(2)O(2) or O(2) as a cosubstrate (PubMed:27587308). Is capable of cleaving cellulose, but not chitin (PubMed:27587308). Is also active on tamarind xyloglucan and longer xyloglucan oligosaccharides (PubMed:27587308). Has no activity toward shorter cellooligosaccharides (Glc3-6), as well as toward the xyloglucan-heptamer, birchwood xylan, wheat arabinoxylan, konjac glucomannan, ivory nut mannan, beta-glucan from barley, lichenan from Icelandic moss, starch, and spruce galactoglucomannan (PubMed:27587308). Has unprecedented broad specificity on xyloglucan, cleaving any glycosidicbond in theb-glucan main chain, regardless of xylosyl substitutions. When incubated with a mixture of xyloglucan and cellulose, efficiently attacks the xyloglucan, whereas cellulose conversion is inhibited, suggesting that removal of hemicellulose may be the true function of this LPMO during biomass conversion (PubMed:27587308).</text>
</comment>
<comment type="catalytic activity">
    <reaction evidence="5">
        <text>[(1-&gt;4)-beta-D-glucosyl]n+m + reduced acceptor + O2 = 4-dehydro-beta-D-glucosyl-[(1-&gt;4)-beta-D-glucosyl]n-1 + [(1-&gt;4)-beta-D-glucosyl]m + acceptor + H2O.</text>
        <dbReference type="EC" id="1.14.99.56"/>
    </reaction>
</comment>
<comment type="cofactor">
    <cofactor evidence="5">
        <name>Cu(2+)</name>
        <dbReference type="ChEBI" id="CHEBI:29036"/>
    </cofactor>
    <text evidence="5">Binds 1 copper ion per subunit.</text>
</comment>
<comment type="subcellular location">
    <subcellularLocation>
        <location evidence="8">Secreted</location>
    </subcellularLocation>
</comment>
<comment type="biotechnology">
    <text evidence="7">Lignocellulose is the most abundant polymeric composite on Earth and is a recalcitrant but promising renewable substrate for industrial biotechnology applications. Together with cellobiose dehydrogenases (CDHs) an enzymatic system capable of oxidative cellulose cleavage is formed, which increases the efficiency of cellulases and put LPMOs at focus of biofuel research.</text>
</comment>
<comment type="similarity">
    <text evidence="7">Belongs to the polysaccharide monooxygenase AA9 family.</text>
</comment>
<dbReference type="EC" id="1.14.99.56" evidence="5"/>
<dbReference type="EMBL" id="HG970332">
    <property type="protein sequence ID" value="CEF74460.1"/>
    <property type="molecule type" value="Genomic_DNA"/>
</dbReference>
<dbReference type="RefSeq" id="XP_011318094.1">
    <property type="nucleotide sequence ID" value="XM_011319792.1"/>
</dbReference>
<dbReference type="SMR" id="I1REU9"/>
<dbReference type="STRING" id="229533.I1REU9"/>
<dbReference type="KEGG" id="fgr:FGSG_02202"/>
<dbReference type="VEuPathDB" id="FungiDB:FGRAMPH1_01G05311"/>
<dbReference type="eggNOG" id="ENOG502RY3D">
    <property type="taxonomic scope" value="Eukaryota"/>
</dbReference>
<dbReference type="HOGENOM" id="CLU_031730_1_0_1"/>
<dbReference type="InParanoid" id="I1REU9"/>
<dbReference type="OrthoDB" id="123163at110618"/>
<dbReference type="BRENDA" id="1.14.99.54">
    <property type="organism ID" value="2428"/>
</dbReference>
<dbReference type="BRENDA" id="1.14.99.56">
    <property type="organism ID" value="2428"/>
</dbReference>
<dbReference type="BRENDA" id="1.14.99.B10">
    <property type="organism ID" value="2428"/>
</dbReference>
<dbReference type="Proteomes" id="UP000070720">
    <property type="component" value="Chromosome 1"/>
</dbReference>
<dbReference type="GO" id="GO:0005576">
    <property type="term" value="C:extracellular region"/>
    <property type="evidence" value="ECO:0007669"/>
    <property type="project" value="UniProtKB-SubCell"/>
</dbReference>
<dbReference type="GO" id="GO:0046872">
    <property type="term" value="F:metal ion binding"/>
    <property type="evidence" value="ECO:0007669"/>
    <property type="project" value="UniProtKB-KW"/>
</dbReference>
<dbReference type="GO" id="GO:0004497">
    <property type="term" value="F:monooxygenase activity"/>
    <property type="evidence" value="ECO:0007669"/>
    <property type="project" value="UniProtKB-KW"/>
</dbReference>
<dbReference type="GO" id="GO:0030245">
    <property type="term" value="P:cellulose catabolic process"/>
    <property type="evidence" value="ECO:0007669"/>
    <property type="project" value="UniProtKB-KW"/>
</dbReference>
<dbReference type="CDD" id="cd21175">
    <property type="entry name" value="LPMO_AA9"/>
    <property type="match status" value="1"/>
</dbReference>
<dbReference type="Gene3D" id="2.70.50.70">
    <property type="match status" value="1"/>
</dbReference>
<dbReference type="InterPro" id="IPR049892">
    <property type="entry name" value="AA9"/>
</dbReference>
<dbReference type="InterPro" id="IPR005103">
    <property type="entry name" value="AA9_LPMO"/>
</dbReference>
<dbReference type="PANTHER" id="PTHR33353:SF36">
    <property type="entry name" value="ENDO-BETA-1,4-GLUCANASE D"/>
    <property type="match status" value="1"/>
</dbReference>
<dbReference type="PANTHER" id="PTHR33353">
    <property type="entry name" value="PUTATIVE (AFU_ORTHOLOGUE AFUA_1G12560)-RELATED"/>
    <property type="match status" value="1"/>
</dbReference>
<dbReference type="Pfam" id="PF03443">
    <property type="entry name" value="AA9"/>
    <property type="match status" value="1"/>
</dbReference>
<organism>
    <name type="scientific">Gibberella zeae (strain ATCC MYA-4620 / CBS 123657 / FGSC 9075 / NRRL 31084 / PH-1)</name>
    <name type="common">Wheat head blight fungus</name>
    <name type="synonym">Fusarium graminearum</name>
    <dbReference type="NCBI Taxonomy" id="229533"/>
    <lineage>
        <taxon>Eukaryota</taxon>
        <taxon>Fungi</taxon>
        <taxon>Dikarya</taxon>
        <taxon>Ascomycota</taxon>
        <taxon>Pezizomycotina</taxon>
        <taxon>Sordariomycetes</taxon>
        <taxon>Hypocreomycetidae</taxon>
        <taxon>Hypocreales</taxon>
        <taxon>Nectriaceae</taxon>
        <taxon>Fusarium</taxon>
    </lineage>
</organism>
<accession>I1REU9</accession>
<gene>
    <name evidence="6" type="primary">LPMO9A</name>
    <name type="ORF">FG02202</name>
    <name type="ORF">FGRAMPH1_01T05311</name>
</gene>
<proteinExistence type="evidence at protein level"/>